<sequence>MGSKGAYRYHWQSHNVKHSGVDDMVLLSKITESSIVENLKKRYMDDYIFTYIGSVLISVNPFKQMPYFGEKEVEMYQGAAQYENPPHIYALADSMYRNMIIDRENQCVIISGESGAGKTVAAKYIMSYVSRVSGGGPKVQHVKDIILQSNPLLEAFGNAKTVRNNNSSRFGKYFEIQFSPGGEPDGGKISNFLLEKSRVVMRNPGERSFHIFYQLIEGASPEQKQSLGITSMDYYYYLSLSGSYKVDDIDDKRDFQETLHAMNVIGIFSEEQTLVLQIVAGILHLGNISFKEVGNYAAVESEEFLAFPAYLLGINQDRLKEKLTSRQMDSKWGGKSESIHVTLNVEQACYTRDALAKALHARVFDFLVDSINKAMEKDHEEYNIGVLDIYGFEIFQKNGFEQFCINFVNEKLQQIFIELTLKAEQEEYVQEGIRWTPIEYFNNKIVCDLIESKVNPPGIMSILDDVCATMHAVGEGADQTLLQKLQMQIGSHEHFNSWNQGFIIHHYAGKVSYDMDGFCERNRDVLFMDLIELMQSSELPFIKSLFPENLQADKKGRPTTAGSKIKKQANDLVSTLMKCTPHYIRCIKPNETKKPKDWEESRVKHQVEYLGLKENIRVRRAGYAYRRVFQKFLQRYAILTKATWPVWRGDEKQGVLHLLQSVNMDSDQFQLGRSKVFIKAPESLFLLEEMRERKYDGYARVIQKTWRKFVARKKYVQMREEASDLLLNKKERRRNSINRNFIGDYIGMEERPELQQFVGKREKIDFADTVTKYDRRFKGVKRDLLLTPKCLYLIGREKVKQGPDKGVVKEVLKRRIEVERILSVSLSTMQDDIFILHEQEYDSLLESVFKTEFLSLLAKRYEEKTQKQLPLKFSNTLELKLKKENWGPWSAGGSRQVQFHQGFGDLAILKPSNKVLQVSIGPGLPKNSRPTRRNTVTSRGYPGGTKNNYPMRAAPAPPGCHQNGVIRNQFVPPPHAFGNQRSNQKSLYTSMARPPLPRQQSTGSDRLSQTPESLDFLKVPDQGVAGVRRQTSSRPPPAGGRPKPQPKPKPQVPQCKALYAYDAQDTDELSFNANDIIDIIKEDPSGWWTGRLRGKQGLFPNNYVTKI</sequence>
<proteinExistence type="evidence at protein level"/>
<evidence type="ECO:0000250" key="1"/>
<evidence type="ECO:0000250" key="2">
    <source>
        <dbReference type="UniProtKB" id="Q12965"/>
    </source>
</evidence>
<evidence type="ECO:0000255" key="3"/>
<evidence type="ECO:0000255" key="4">
    <source>
        <dbReference type="PROSITE-ProRule" id="PRU00116"/>
    </source>
</evidence>
<evidence type="ECO:0000255" key="5">
    <source>
        <dbReference type="PROSITE-ProRule" id="PRU00192"/>
    </source>
</evidence>
<evidence type="ECO:0000255" key="6">
    <source>
        <dbReference type="PROSITE-ProRule" id="PRU00782"/>
    </source>
</evidence>
<evidence type="ECO:0000255" key="7">
    <source>
        <dbReference type="PROSITE-ProRule" id="PRU01093"/>
    </source>
</evidence>
<evidence type="ECO:0000256" key="8">
    <source>
        <dbReference type="SAM" id="MobiDB-lite"/>
    </source>
</evidence>
<evidence type="ECO:0000269" key="9">
    <source>
    </source>
</evidence>
<evidence type="ECO:0000269" key="10">
    <source>
    </source>
</evidence>
<evidence type="ECO:0000305" key="11"/>
<evidence type="ECO:0000305" key="12">
    <source>
    </source>
</evidence>
<evidence type="ECO:0007829" key="13">
    <source>
        <dbReference type="PDB" id="2XMF"/>
    </source>
</evidence>
<accession>E9Q634</accession>
<accession>Q80X36</accession>
<accession>Q91ZI4</accession>
<organism>
    <name type="scientific">Mus musculus</name>
    <name type="common">Mouse</name>
    <dbReference type="NCBI Taxonomy" id="10090"/>
    <lineage>
        <taxon>Eukaryota</taxon>
        <taxon>Metazoa</taxon>
        <taxon>Chordata</taxon>
        <taxon>Craniata</taxon>
        <taxon>Vertebrata</taxon>
        <taxon>Euteleostomi</taxon>
        <taxon>Mammalia</taxon>
        <taxon>Eutheria</taxon>
        <taxon>Euarchontoglires</taxon>
        <taxon>Glires</taxon>
        <taxon>Rodentia</taxon>
        <taxon>Myomorpha</taxon>
        <taxon>Muroidea</taxon>
        <taxon>Muridae</taxon>
        <taxon>Murinae</taxon>
        <taxon>Mus</taxon>
        <taxon>Mus</taxon>
    </lineage>
</organism>
<protein>
    <recommendedName>
        <fullName>Unconventional myosin-Ie</fullName>
    </recommendedName>
    <alternativeName>
        <fullName>Unconventional myosin 1E</fullName>
    </alternativeName>
</protein>
<comment type="function">
    <text evidence="1 10">Myosins are actin-based motor molecules with ATPase activity. Unconventional myosins serve in intracellular movements. Their highly divergent tails bind to membranous compartments, which are then moved relative to actin filaments. Binds to membranes containing anionic phospholipids via its tail domain (By similarity). Involved in clathrin-mediated endocytosis and intracellular movement of clathrin-coated ve (By similarity)sicles. Required for normal morphology of the glomerular basement membrane, normal development of foot processes by kidney podocytes and normal kidney function. In dendritic cells, may control the movement of class II-containing cytoplasmic vesicles along the actin cytoskeleton by connecting them with the actin network via ARL14EP and ARL14 (By similarity).</text>
</comment>
<comment type="subunit">
    <text evidence="2">Interacts with CALM and F-actin. Interacts (via SH3 domain) with SYNJ1, DNM1 and DNM2. Interacts with ARL14EP. Interacts with CARMIL1.</text>
</comment>
<comment type="subcellular location">
    <subcellularLocation>
        <location evidence="10">Cytoplasm</location>
    </subcellularLocation>
    <subcellularLocation>
        <location evidence="10">Cell junction</location>
    </subcellularLocation>
    <subcellularLocation>
        <location evidence="12">Cytoplasmic vesicle</location>
    </subcellularLocation>
    <subcellularLocation>
        <location evidence="10">Cytoplasmic vesicle</location>
        <location evidence="10">Clathrin-coated vesicle</location>
    </subcellularLocation>
    <subcellularLocation>
        <location evidence="10">Cytoplasm</location>
        <location evidence="10">Cytoskeleton</location>
    </subcellularLocation>
    <text evidence="1">In podocytes, it localizes close to and is associated with the cytoplasmic membrane, with enrichment at the lamellipodia tips. Colocalizes with F-actin (By similarity). Detected in cytoplasmic punctae.</text>
</comment>
<comment type="tissue specificity">
    <text evidence="9 10">Detected in kidney glomeruli (at protein level). Detected in utricle.</text>
</comment>
<comment type="disruption phenotype">
    <text evidence="10">No visible phenotype at birth. Mice exhibit massive proteinuria, combined with the presence of leukocytes and hemoglobin in the urine. They develop enlarged kidneys, present damage to the glomeruli, renal inflammation and fibrosis. In the glomeruli, the thickness of the basement membrane is increased, and podocytes fail to develop normal foot processes.</text>
</comment>
<comment type="similarity">
    <text evidence="11">Belongs to the TRAFAC class myosin-kinesin ATPase superfamily. Myosin family.</text>
</comment>
<comment type="caution">
    <text evidence="11">Represents an unconventional myosin. This protein should not be confused with the conventional myosin-1 (MYH1).</text>
</comment>
<name>MYO1E_MOUSE</name>
<dbReference type="EMBL" id="AC157086">
    <property type="status" value="NOT_ANNOTATED_CDS"/>
    <property type="molecule type" value="Genomic_DNA"/>
</dbReference>
<dbReference type="EMBL" id="AC157950">
    <property type="status" value="NOT_ANNOTATED_CDS"/>
    <property type="molecule type" value="Genomic_DNA"/>
</dbReference>
<dbReference type="EMBL" id="AC157996">
    <property type="status" value="NOT_ANNOTATED_CDS"/>
    <property type="molecule type" value="Genomic_DNA"/>
</dbReference>
<dbReference type="EMBL" id="BC051391">
    <property type="protein sequence ID" value="AAH51391.1"/>
    <property type="molecule type" value="mRNA"/>
</dbReference>
<dbReference type="EMBL" id="AF426465">
    <property type="protein sequence ID" value="AAL26545.1"/>
    <property type="molecule type" value="mRNA"/>
</dbReference>
<dbReference type="CCDS" id="CCDS40680.1"/>
<dbReference type="RefSeq" id="NP_851417.2">
    <property type="nucleotide sequence ID" value="NM_181072.3"/>
</dbReference>
<dbReference type="PDB" id="2XMF">
    <property type="method" value="X-ray"/>
    <property type="resolution" value="1.50 A"/>
    <property type="chains" value="A=1053-1107"/>
</dbReference>
<dbReference type="PDBsum" id="2XMF"/>
<dbReference type="SMR" id="E9Q634"/>
<dbReference type="BioGRID" id="214807">
    <property type="interactions" value="8"/>
</dbReference>
<dbReference type="FunCoup" id="E9Q634">
    <property type="interactions" value="452"/>
</dbReference>
<dbReference type="IntAct" id="E9Q634">
    <property type="interactions" value="3"/>
</dbReference>
<dbReference type="MINT" id="E9Q634"/>
<dbReference type="STRING" id="10090.ENSMUSP00000034745"/>
<dbReference type="GlyGen" id="E9Q634">
    <property type="glycosylation" value="1 site, 1 O-linked glycan (1 site)"/>
</dbReference>
<dbReference type="iPTMnet" id="E9Q634"/>
<dbReference type="PhosphoSitePlus" id="E9Q634"/>
<dbReference type="jPOST" id="E9Q634"/>
<dbReference type="PaxDb" id="10090-ENSMUSP00000034745"/>
<dbReference type="PeptideAtlas" id="E9Q634"/>
<dbReference type="ProteomicsDB" id="287583"/>
<dbReference type="Pumba" id="E9Q634"/>
<dbReference type="Antibodypedia" id="12911">
    <property type="antibodies" value="158 antibodies from 26 providers"/>
</dbReference>
<dbReference type="DNASU" id="71602"/>
<dbReference type="Ensembl" id="ENSMUST00000034745.9">
    <property type="protein sequence ID" value="ENSMUSP00000034745.8"/>
    <property type="gene ID" value="ENSMUSG00000032220.11"/>
</dbReference>
<dbReference type="GeneID" id="71602"/>
<dbReference type="KEGG" id="mmu:71602"/>
<dbReference type="UCSC" id="uc009qnx.1">
    <property type="organism name" value="mouse"/>
</dbReference>
<dbReference type="AGR" id="MGI:106621"/>
<dbReference type="CTD" id="4643"/>
<dbReference type="MGI" id="MGI:106621">
    <property type="gene designation" value="Myo1e"/>
</dbReference>
<dbReference type="VEuPathDB" id="HostDB:ENSMUSG00000032220"/>
<dbReference type="eggNOG" id="KOG0162">
    <property type="taxonomic scope" value="Eukaryota"/>
</dbReference>
<dbReference type="GeneTree" id="ENSGT00940000157461"/>
<dbReference type="HOGENOM" id="CLU_000192_7_6_1"/>
<dbReference type="InParanoid" id="E9Q634"/>
<dbReference type="OMA" id="WKDISFF"/>
<dbReference type="PhylomeDB" id="E9Q634"/>
<dbReference type="TreeFam" id="TF312960"/>
<dbReference type="BioGRID-ORCS" id="71602">
    <property type="hits" value="1 hit in 77 CRISPR screens"/>
</dbReference>
<dbReference type="ChiTaRS" id="Myo1e">
    <property type="organism name" value="mouse"/>
</dbReference>
<dbReference type="EvolutionaryTrace" id="E9Q634"/>
<dbReference type="PRO" id="PR:E9Q634"/>
<dbReference type="Proteomes" id="UP000000589">
    <property type="component" value="Chromosome 9"/>
</dbReference>
<dbReference type="RNAct" id="E9Q634">
    <property type="molecule type" value="protein"/>
</dbReference>
<dbReference type="Bgee" id="ENSMUSG00000032220">
    <property type="expression patterns" value="Expressed in lumbar dorsal root ganglion and 183 other cell types or tissues"/>
</dbReference>
<dbReference type="ExpressionAtlas" id="E9Q634">
    <property type="expression patterns" value="baseline and differential"/>
</dbReference>
<dbReference type="GO" id="GO:0005912">
    <property type="term" value="C:adherens junction"/>
    <property type="evidence" value="ECO:0000314"/>
    <property type="project" value="UniProtKB"/>
</dbReference>
<dbReference type="GO" id="GO:0005903">
    <property type="term" value="C:brush border"/>
    <property type="evidence" value="ECO:0000314"/>
    <property type="project" value="UniProtKB"/>
</dbReference>
<dbReference type="GO" id="GO:0045334">
    <property type="term" value="C:clathrin-coated endocytic vesicle"/>
    <property type="evidence" value="ECO:0007669"/>
    <property type="project" value="Ensembl"/>
</dbReference>
<dbReference type="GO" id="GO:0005737">
    <property type="term" value="C:cytoplasm"/>
    <property type="evidence" value="ECO:0000314"/>
    <property type="project" value="UniProtKB"/>
</dbReference>
<dbReference type="GO" id="GO:0005856">
    <property type="term" value="C:cytoskeleton"/>
    <property type="evidence" value="ECO:0000250"/>
    <property type="project" value="UniProtKB"/>
</dbReference>
<dbReference type="GO" id="GO:0016459">
    <property type="term" value="C:myosin complex"/>
    <property type="evidence" value="ECO:0007669"/>
    <property type="project" value="UniProtKB-KW"/>
</dbReference>
<dbReference type="GO" id="GO:0051015">
    <property type="term" value="F:actin filament binding"/>
    <property type="evidence" value="ECO:0000250"/>
    <property type="project" value="UniProtKB"/>
</dbReference>
<dbReference type="GO" id="GO:0005524">
    <property type="term" value="F:ATP binding"/>
    <property type="evidence" value="ECO:0007669"/>
    <property type="project" value="UniProtKB-KW"/>
</dbReference>
<dbReference type="GO" id="GO:0016887">
    <property type="term" value="F:ATP hydrolysis activity"/>
    <property type="evidence" value="ECO:0000250"/>
    <property type="project" value="UniProtKB"/>
</dbReference>
<dbReference type="GO" id="GO:0005516">
    <property type="term" value="F:calmodulin binding"/>
    <property type="evidence" value="ECO:0000250"/>
    <property type="project" value="UniProtKB"/>
</dbReference>
<dbReference type="GO" id="GO:0003774">
    <property type="term" value="F:cytoskeletal motor activity"/>
    <property type="evidence" value="ECO:0007669"/>
    <property type="project" value="InterPro"/>
</dbReference>
<dbReference type="GO" id="GO:0035091">
    <property type="term" value="F:phosphatidylinositol binding"/>
    <property type="evidence" value="ECO:0000250"/>
    <property type="project" value="UniProtKB"/>
</dbReference>
<dbReference type="GO" id="GO:0006897">
    <property type="term" value="P:endocytosis"/>
    <property type="evidence" value="ECO:0000250"/>
    <property type="project" value="UniProtKB"/>
</dbReference>
<dbReference type="GO" id="GO:0032836">
    <property type="term" value="P:glomerular basement membrane development"/>
    <property type="evidence" value="ECO:0000315"/>
    <property type="project" value="UniProtKB"/>
</dbReference>
<dbReference type="GO" id="GO:0003094">
    <property type="term" value="P:glomerular filtration"/>
    <property type="evidence" value="ECO:0000315"/>
    <property type="project" value="UniProtKB"/>
</dbReference>
<dbReference type="GO" id="GO:0030097">
    <property type="term" value="P:hemopoiesis"/>
    <property type="evidence" value="ECO:0000315"/>
    <property type="project" value="MGI"/>
</dbReference>
<dbReference type="GO" id="GO:0001701">
    <property type="term" value="P:in utero embryonic development"/>
    <property type="evidence" value="ECO:0000315"/>
    <property type="project" value="MGI"/>
</dbReference>
<dbReference type="GO" id="GO:0001822">
    <property type="term" value="P:kidney development"/>
    <property type="evidence" value="ECO:0000315"/>
    <property type="project" value="MGI"/>
</dbReference>
<dbReference type="GO" id="GO:0048008">
    <property type="term" value="P:platelet-derived growth factor receptor signaling pathway"/>
    <property type="evidence" value="ECO:0000315"/>
    <property type="project" value="MGI"/>
</dbReference>
<dbReference type="GO" id="GO:0072015">
    <property type="term" value="P:podocyte development"/>
    <property type="evidence" value="ECO:0000315"/>
    <property type="project" value="UniProtKB"/>
</dbReference>
<dbReference type="GO" id="GO:0035166">
    <property type="term" value="P:post-embryonic hemopoiesis"/>
    <property type="evidence" value="ECO:0000315"/>
    <property type="project" value="MGI"/>
</dbReference>
<dbReference type="GO" id="GO:0001570">
    <property type="term" value="P:vasculogenesis"/>
    <property type="evidence" value="ECO:0000315"/>
    <property type="project" value="MGI"/>
</dbReference>
<dbReference type="CDD" id="cd01378">
    <property type="entry name" value="MYSc_Myo1"/>
    <property type="match status" value="1"/>
</dbReference>
<dbReference type="CDD" id="cd11827">
    <property type="entry name" value="SH3_MyoIe_If_like"/>
    <property type="match status" value="1"/>
</dbReference>
<dbReference type="FunFam" id="1.10.10.820:FF:000001">
    <property type="entry name" value="Myosin heavy chain"/>
    <property type="match status" value="1"/>
</dbReference>
<dbReference type="FunFam" id="1.20.5.4820:FF:000004">
    <property type="entry name" value="Myosin IE"/>
    <property type="match status" value="1"/>
</dbReference>
<dbReference type="FunFam" id="1.20.58.530:FF:000007">
    <property type="entry name" value="Myosin IE"/>
    <property type="match status" value="1"/>
</dbReference>
<dbReference type="FunFam" id="3.40.850.10:FF:000101">
    <property type="entry name" value="Slow myosin heavy chain 2"/>
    <property type="match status" value="1"/>
</dbReference>
<dbReference type="FunFam" id="2.30.30.40:FF:000072">
    <property type="entry name" value="Unconventional Myosin IB"/>
    <property type="match status" value="1"/>
</dbReference>
<dbReference type="FunFam" id="1.20.120.720:FF:000010">
    <property type="entry name" value="Unconventional myosin-Ie"/>
    <property type="match status" value="1"/>
</dbReference>
<dbReference type="Gene3D" id="1.10.10.820">
    <property type="match status" value="1"/>
</dbReference>
<dbReference type="Gene3D" id="1.20.5.4820">
    <property type="match status" value="1"/>
</dbReference>
<dbReference type="Gene3D" id="1.20.58.530">
    <property type="match status" value="1"/>
</dbReference>
<dbReference type="Gene3D" id="3.40.850.10">
    <property type="entry name" value="Kinesin motor domain"/>
    <property type="match status" value="1"/>
</dbReference>
<dbReference type="Gene3D" id="1.20.120.720">
    <property type="entry name" value="Myosin VI head, motor domain, U50 subdomain"/>
    <property type="match status" value="1"/>
</dbReference>
<dbReference type="Gene3D" id="2.30.30.40">
    <property type="entry name" value="SH3 Domains"/>
    <property type="match status" value="1"/>
</dbReference>
<dbReference type="InterPro" id="IPR035507">
    <property type="entry name" value="Ie/If_SH3"/>
</dbReference>
<dbReference type="InterPro" id="IPR036961">
    <property type="entry name" value="Kinesin_motor_dom_sf"/>
</dbReference>
<dbReference type="InterPro" id="IPR001609">
    <property type="entry name" value="Myosin_head_motor_dom-like"/>
</dbReference>
<dbReference type="InterPro" id="IPR010926">
    <property type="entry name" value="Myosin_TH1"/>
</dbReference>
<dbReference type="InterPro" id="IPR036072">
    <property type="entry name" value="MYSc_Myo1"/>
</dbReference>
<dbReference type="InterPro" id="IPR027417">
    <property type="entry name" value="P-loop_NTPase"/>
</dbReference>
<dbReference type="InterPro" id="IPR036028">
    <property type="entry name" value="SH3-like_dom_sf"/>
</dbReference>
<dbReference type="InterPro" id="IPR001452">
    <property type="entry name" value="SH3_domain"/>
</dbReference>
<dbReference type="PANTHER" id="PTHR13140">
    <property type="entry name" value="MYOSIN"/>
    <property type="match status" value="1"/>
</dbReference>
<dbReference type="PANTHER" id="PTHR13140:SF341">
    <property type="entry name" value="UNCONVENTIONAL MYOSIN-IE"/>
    <property type="match status" value="1"/>
</dbReference>
<dbReference type="Pfam" id="PF00063">
    <property type="entry name" value="Myosin_head"/>
    <property type="match status" value="1"/>
</dbReference>
<dbReference type="Pfam" id="PF06017">
    <property type="entry name" value="Myosin_TH1"/>
    <property type="match status" value="1"/>
</dbReference>
<dbReference type="Pfam" id="PF00018">
    <property type="entry name" value="SH3_1"/>
    <property type="match status" value="1"/>
</dbReference>
<dbReference type="PRINTS" id="PR00193">
    <property type="entry name" value="MYOSINHEAVY"/>
</dbReference>
<dbReference type="PRINTS" id="PR00452">
    <property type="entry name" value="SH3DOMAIN"/>
</dbReference>
<dbReference type="SMART" id="SM00242">
    <property type="entry name" value="MYSc"/>
    <property type="match status" value="1"/>
</dbReference>
<dbReference type="SMART" id="SM00326">
    <property type="entry name" value="SH3"/>
    <property type="match status" value="1"/>
</dbReference>
<dbReference type="SUPFAM" id="SSF52540">
    <property type="entry name" value="P-loop containing nucleoside triphosphate hydrolases"/>
    <property type="match status" value="1"/>
</dbReference>
<dbReference type="SUPFAM" id="SSF50044">
    <property type="entry name" value="SH3-domain"/>
    <property type="match status" value="1"/>
</dbReference>
<dbReference type="PROSITE" id="PS50096">
    <property type="entry name" value="IQ"/>
    <property type="match status" value="1"/>
</dbReference>
<dbReference type="PROSITE" id="PS51456">
    <property type="entry name" value="MYOSIN_MOTOR"/>
    <property type="match status" value="1"/>
</dbReference>
<dbReference type="PROSITE" id="PS50002">
    <property type="entry name" value="SH3"/>
    <property type="match status" value="1"/>
</dbReference>
<dbReference type="PROSITE" id="PS51757">
    <property type="entry name" value="TH1"/>
    <property type="match status" value="1"/>
</dbReference>
<reference key="1">
    <citation type="journal article" date="2009" name="PLoS Biol.">
        <title>Lineage-specific biology revealed by a finished genome assembly of the mouse.</title>
        <authorList>
            <person name="Church D.M."/>
            <person name="Goodstadt L."/>
            <person name="Hillier L.W."/>
            <person name="Zody M.C."/>
            <person name="Goldstein S."/>
            <person name="She X."/>
            <person name="Bult C.J."/>
            <person name="Agarwala R."/>
            <person name="Cherry J.L."/>
            <person name="DiCuccio M."/>
            <person name="Hlavina W."/>
            <person name="Kapustin Y."/>
            <person name="Meric P."/>
            <person name="Maglott D."/>
            <person name="Birtle Z."/>
            <person name="Marques A.C."/>
            <person name="Graves T."/>
            <person name="Zhou S."/>
            <person name="Teague B."/>
            <person name="Potamousis K."/>
            <person name="Churas C."/>
            <person name="Place M."/>
            <person name="Herschleb J."/>
            <person name="Runnheim R."/>
            <person name="Forrest D."/>
            <person name="Amos-Landgraf J."/>
            <person name="Schwartz D.C."/>
            <person name="Cheng Z."/>
            <person name="Lindblad-Toh K."/>
            <person name="Eichler E.E."/>
            <person name="Ponting C.P."/>
        </authorList>
    </citation>
    <scope>NUCLEOTIDE SEQUENCE [LARGE SCALE GENOMIC DNA]</scope>
    <source>
        <strain>C57BL/6J</strain>
    </source>
</reference>
<reference key="2">
    <citation type="journal article" date="2004" name="Genome Res.">
        <title>The status, quality, and expansion of the NIH full-length cDNA project: the Mammalian Gene Collection (MGC).</title>
        <authorList>
            <consortium name="The MGC Project Team"/>
        </authorList>
    </citation>
    <scope>NUCLEOTIDE SEQUENCE [LARGE SCALE MRNA]</scope>
    <source>
        <strain>FVB/N</strain>
        <tissue>Liver</tissue>
    </source>
</reference>
<reference key="3">
    <citation type="journal article" date="2002" name="J. Assoc. Res. Otolaryngol.">
        <title>Myosin-I isozymes in neonatal rodent auditory and vestibular epithelia.</title>
        <authorList>
            <person name="Dumont R.A."/>
            <person name="Zhao Y.-D."/>
            <person name="Holt J.R."/>
            <person name="Baehler M."/>
            <person name="Gillespie P.G."/>
        </authorList>
    </citation>
    <scope>NUCLEOTIDE SEQUENCE [MRNA] OF 600-726</scope>
    <scope>TISSUE SPECIFICITY</scope>
    <source>
        <strain>C57BL/6J</strain>
    </source>
</reference>
<reference key="4">
    <citation type="journal article" date="2009" name="Immunity">
        <title>The phagosomal proteome in interferon-gamma-activated macrophages.</title>
        <authorList>
            <person name="Trost M."/>
            <person name="English L."/>
            <person name="Lemieux S."/>
            <person name="Courcelles M."/>
            <person name="Desjardins M."/>
            <person name="Thibault P."/>
        </authorList>
    </citation>
    <scope>IDENTIFICATION BY MASS SPECTROMETRY [LARGE SCALE ANALYSIS]</scope>
</reference>
<reference key="5">
    <citation type="journal article" date="2009" name="J. Am. Soc. Nephrol.">
        <title>Disruption of Myosin 1e promotes podocyte injury.</title>
        <authorList>
            <person name="Krendel M."/>
            <person name="Kim S.V."/>
            <person name="Willinger T."/>
            <person name="Wang T."/>
            <person name="Kashgarian M."/>
            <person name="Flavell R.A."/>
            <person name="Mooseker M.S."/>
        </authorList>
    </citation>
    <scope>DISRUPTION PHENOTYPE</scope>
    <scope>FUNCTION</scope>
    <scope>SUBCELLULAR LOCATION</scope>
    <scope>TISSUE SPECIFICITY</scope>
</reference>
<reference key="6">
    <citation type="journal article" date="2010" name="Cell">
        <title>A tissue-specific atlas of mouse protein phosphorylation and expression.</title>
        <authorList>
            <person name="Huttlin E.L."/>
            <person name="Jedrychowski M.P."/>
            <person name="Elias J.E."/>
            <person name="Goswami T."/>
            <person name="Rad R."/>
            <person name="Beausoleil S.A."/>
            <person name="Villen J."/>
            <person name="Haas W."/>
            <person name="Sowa M.E."/>
            <person name="Gygi S.P."/>
        </authorList>
    </citation>
    <scope>IDENTIFICATION BY MASS SPECTROMETRY [LARGE SCALE ANALYSIS]</scope>
    <source>
        <tissue>Brown adipose tissue</tissue>
        <tissue>Heart</tissue>
        <tissue>Kidney</tissue>
        <tissue>Liver</tissue>
        <tissue>Lung</tissue>
        <tissue>Pancreas</tissue>
        <tissue>Spleen</tissue>
    </source>
</reference>
<reference key="7">
    <citation type="submission" date="2011-08" db="PDB data bank">
        <title>Myosin 1E SH3 domain.</title>
        <authorList>
            <person name="Allsop G."/>
            <person name="Harris S.A."/>
            <person name="Peckham M."/>
            <person name="Edwards T."/>
        </authorList>
    </citation>
    <scope>X-RAY CRYSTALLOGRAPHY (1.5 ANGSTROMS) OF 1053-1107</scope>
</reference>
<keyword id="KW-0002">3D-structure</keyword>
<keyword id="KW-0009">Actin-binding</keyword>
<keyword id="KW-0067">ATP-binding</keyword>
<keyword id="KW-0112">Calmodulin-binding</keyword>
<keyword id="KW-0965">Cell junction</keyword>
<keyword id="KW-0963">Cytoplasm</keyword>
<keyword id="KW-0968">Cytoplasmic vesicle</keyword>
<keyword id="KW-0206">Cytoskeleton</keyword>
<keyword id="KW-0446">Lipid-binding</keyword>
<keyword id="KW-0505">Motor protein</keyword>
<keyword id="KW-0518">Myosin</keyword>
<keyword id="KW-0547">Nucleotide-binding</keyword>
<keyword id="KW-0597">Phosphoprotein</keyword>
<keyword id="KW-1185">Reference proteome</keyword>
<keyword id="KW-0728">SH3 domain</keyword>
<feature type="chain" id="PRO_0000415664" description="Unconventional myosin-Ie">
    <location>
        <begin position="1"/>
        <end position="1107"/>
    </location>
</feature>
<feature type="domain" description="Myosin motor" evidence="6">
    <location>
        <begin position="19"/>
        <end position="692"/>
    </location>
</feature>
<feature type="domain" description="IQ" evidence="4">
    <location>
        <begin position="695"/>
        <end position="724"/>
    </location>
</feature>
<feature type="domain" description="TH1" evidence="7">
    <location>
        <begin position="730"/>
        <end position="922"/>
    </location>
</feature>
<feature type="domain" description="SH3" evidence="5">
    <location>
        <begin position="1050"/>
        <end position="1107"/>
    </location>
</feature>
<feature type="region of interest" description="Actin-binding" evidence="3">
    <location>
        <begin position="581"/>
        <end position="591"/>
    </location>
</feature>
<feature type="region of interest" description="Disordered" evidence="8">
    <location>
        <begin position="919"/>
        <end position="1052"/>
    </location>
</feature>
<feature type="compositionally biased region" description="Polar residues" evidence="8">
    <location>
        <begin position="979"/>
        <end position="989"/>
    </location>
</feature>
<feature type="compositionally biased region" description="Polar residues" evidence="8">
    <location>
        <begin position="998"/>
        <end position="1012"/>
    </location>
</feature>
<feature type="compositionally biased region" description="Pro residues" evidence="8">
    <location>
        <begin position="1034"/>
        <end position="1051"/>
    </location>
</feature>
<feature type="binding site" evidence="3">
    <location>
        <begin position="112"/>
        <end position="119"/>
    </location>
    <ligand>
        <name>ATP</name>
        <dbReference type="ChEBI" id="CHEBI:30616"/>
    </ligand>
</feature>
<feature type="modified residue" description="Phosphoserine" evidence="2">
    <location>
        <position position="1001"/>
    </location>
</feature>
<feature type="sequence conflict" description="In Ref. 2; AAH51391." evidence="11" ref="2">
    <original>V</original>
    <variation>I</variation>
    <location>
        <position position="73"/>
    </location>
</feature>
<feature type="strand" evidence="13">
    <location>
        <begin position="1054"/>
        <end position="1059"/>
    </location>
</feature>
<feature type="strand" evidence="13">
    <location>
        <begin position="1076"/>
        <end position="1082"/>
    </location>
</feature>
<feature type="strand" evidence="13">
    <location>
        <begin position="1086"/>
        <end position="1092"/>
    </location>
</feature>
<feature type="strand" evidence="13">
    <location>
        <begin position="1095"/>
        <end position="1100"/>
    </location>
</feature>
<feature type="helix" evidence="13">
    <location>
        <begin position="1101"/>
        <end position="1103"/>
    </location>
</feature>
<feature type="strand" evidence="13">
    <location>
        <begin position="1104"/>
        <end position="1106"/>
    </location>
</feature>
<gene>
    <name type="primary">Myo1e</name>
    <name type="synonym">Myr3</name>
</gene>